<feature type="chain" id="PRO_0000210306" description="Mitochondrial import inner membrane translocase subunit tim23">
    <location>
        <begin position="1"/>
        <end position="210"/>
    </location>
</feature>
<feature type="transmembrane region" description="Helical" evidence="2">
    <location>
        <begin position="87"/>
        <end position="103"/>
    </location>
</feature>
<feature type="transmembrane region" description="Helical" evidence="2">
    <location>
        <begin position="133"/>
        <end position="153"/>
    </location>
</feature>
<feature type="transmembrane region" description="Helical" evidence="2">
    <location>
        <begin position="183"/>
        <end position="201"/>
    </location>
</feature>
<feature type="region of interest" description="Disordered" evidence="3">
    <location>
        <begin position="1"/>
        <end position="24"/>
    </location>
</feature>
<feature type="compositionally biased region" description="Basic and acidic residues" evidence="3">
    <location>
        <begin position="7"/>
        <end position="19"/>
    </location>
</feature>
<comment type="function">
    <text evidence="1">Essential component of the TIM23 complex, a complex that mediates the translocation of transit peptide-containing proteins across the mitochondrial inner membrane.</text>
</comment>
<comment type="subunit">
    <text evidence="1">Component of the TIM23 complex, at least composed of tim23, tim17, tim50 and tim21. The complex interacts with the tim44 component of the PAM complex (By similarity).</text>
</comment>
<comment type="subcellular location">
    <subcellularLocation>
        <location evidence="1">Mitochondrion inner membrane</location>
        <topology evidence="1">Multi-pass membrane protein</topology>
    </subcellularLocation>
</comment>
<comment type="similarity">
    <text evidence="4">Belongs to the Tim17/Tim22/Tim23 family.</text>
</comment>
<dbReference type="EMBL" id="CU329672">
    <property type="protein sequence ID" value="CAB53081.1"/>
    <property type="molecule type" value="Genomic_DNA"/>
</dbReference>
<dbReference type="PIR" id="T41082">
    <property type="entry name" value="T41082"/>
</dbReference>
<dbReference type="RefSeq" id="NP_587996.1">
    <property type="nucleotide sequence ID" value="NM_001022987.2"/>
</dbReference>
<dbReference type="SMR" id="Q9USM7"/>
<dbReference type="BioGRID" id="275365">
    <property type="interactions" value="1"/>
</dbReference>
<dbReference type="ComplexPortal" id="CPX-540">
    <property type="entry name" value="Mitochondrial inner membrane pre-sequence translocase complex"/>
</dbReference>
<dbReference type="FunCoup" id="Q9USM7">
    <property type="interactions" value="599"/>
</dbReference>
<dbReference type="STRING" id="284812.Q9USM7"/>
<dbReference type="PaxDb" id="4896-SPCC16A11.09c.1"/>
<dbReference type="EnsemblFungi" id="SPCC16A11.09c.1">
    <property type="protein sequence ID" value="SPCC16A11.09c.1:pep"/>
    <property type="gene ID" value="SPCC16A11.09c"/>
</dbReference>
<dbReference type="GeneID" id="2538784"/>
<dbReference type="KEGG" id="spo:2538784"/>
<dbReference type="PomBase" id="SPCC16A11.09c">
    <property type="gene designation" value="tim23"/>
</dbReference>
<dbReference type="VEuPathDB" id="FungiDB:SPCC16A11.09c"/>
<dbReference type="eggNOG" id="KOG3324">
    <property type="taxonomic scope" value="Eukaryota"/>
</dbReference>
<dbReference type="HOGENOM" id="CLU_063935_0_0_1"/>
<dbReference type="InParanoid" id="Q9USM7"/>
<dbReference type="OMA" id="QYIMPEG"/>
<dbReference type="PhylomeDB" id="Q9USM7"/>
<dbReference type="Reactome" id="R-SPO-1268020">
    <property type="pathway name" value="Mitochondrial protein import"/>
</dbReference>
<dbReference type="PRO" id="PR:Q9USM7"/>
<dbReference type="Proteomes" id="UP000002485">
    <property type="component" value="Chromosome III"/>
</dbReference>
<dbReference type="GO" id="GO:0005739">
    <property type="term" value="C:mitochondrion"/>
    <property type="evidence" value="ECO:0007005"/>
    <property type="project" value="PomBase"/>
</dbReference>
<dbReference type="GO" id="GO:0005744">
    <property type="term" value="C:TIM23 mitochondrial import inner membrane translocase complex"/>
    <property type="evidence" value="ECO:0000318"/>
    <property type="project" value="GO_Central"/>
</dbReference>
<dbReference type="GO" id="GO:0008320">
    <property type="term" value="F:protein transmembrane transporter activity"/>
    <property type="evidence" value="ECO:0000318"/>
    <property type="project" value="GO_Central"/>
</dbReference>
<dbReference type="GO" id="GO:0006886">
    <property type="term" value="P:intracellular protein transport"/>
    <property type="evidence" value="ECO:0000304"/>
    <property type="project" value="PomBase"/>
</dbReference>
<dbReference type="GO" id="GO:0030150">
    <property type="term" value="P:protein import into mitochondrial matrix"/>
    <property type="evidence" value="ECO:0000266"/>
    <property type="project" value="PomBase"/>
</dbReference>
<dbReference type="InterPro" id="IPR005681">
    <property type="entry name" value="Tim23"/>
</dbReference>
<dbReference type="InterPro" id="IPR045238">
    <property type="entry name" value="Tim23-like"/>
</dbReference>
<dbReference type="NCBIfam" id="TIGR00983">
    <property type="entry name" value="3a0801s02tim23"/>
    <property type="match status" value="1"/>
</dbReference>
<dbReference type="PANTHER" id="PTHR15371:SF0">
    <property type="entry name" value="SD19278P"/>
    <property type="match status" value="1"/>
</dbReference>
<dbReference type="PANTHER" id="PTHR15371">
    <property type="entry name" value="TIM23"/>
    <property type="match status" value="1"/>
</dbReference>
<dbReference type="Pfam" id="PF02466">
    <property type="entry name" value="Tim17"/>
    <property type="match status" value="1"/>
</dbReference>
<protein>
    <recommendedName>
        <fullName>Mitochondrial import inner membrane translocase subunit tim23</fullName>
    </recommendedName>
</protein>
<reference key="1">
    <citation type="journal article" date="2002" name="Nature">
        <title>The genome sequence of Schizosaccharomyces pombe.</title>
        <authorList>
            <person name="Wood V."/>
            <person name="Gwilliam R."/>
            <person name="Rajandream M.A."/>
            <person name="Lyne M.H."/>
            <person name="Lyne R."/>
            <person name="Stewart A."/>
            <person name="Sgouros J.G."/>
            <person name="Peat N."/>
            <person name="Hayles J."/>
            <person name="Baker S.G."/>
            <person name="Basham D."/>
            <person name="Bowman S."/>
            <person name="Brooks K."/>
            <person name="Brown D."/>
            <person name="Brown S."/>
            <person name="Chillingworth T."/>
            <person name="Churcher C.M."/>
            <person name="Collins M."/>
            <person name="Connor R."/>
            <person name="Cronin A."/>
            <person name="Davis P."/>
            <person name="Feltwell T."/>
            <person name="Fraser A."/>
            <person name="Gentles S."/>
            <person name="Goble A."/>
            <person name="Hamlin N."/>
            <person name="Harris D.E."/>
            <person name="Hidalgo J."/>
            <person name="Hodgson G."/>
            <person name="Holroyd S."/>
            <person name="Hornsby T."/>
            <person name="Howarth S."/>
            <person name="Huckle E.J."/>
            <person name="Hunt S."/>
            <person name="Jagels K."/>
            <person name="James K.D."/>
            <person name="Jones L."/>
            <person name="Jones M."/>
            <person name="Leather S."/>
            <person name="McDonald S."/>
            <person name="McLean J."/>
            <person name="Mooney P."/>
            <person name="Moule S."/>
            <person name="Mungall K.L."/>
            <person name="Murphy L.D."/>
            <person name="Niblett D."/>
            <person name="Odell C."/>
            <person name="Oliver K."/>
            <person name="O'Neil S."/>
            <person name="Pearson D."/>
            <person name="Quail M.A."/>
            <person name="Rabbinowitsch E."/>
            <person name="Rutherford K.M."/>
            <person name="Rutter S."/>
            <person name="Saunders D."/>
            <person name="Seeger K."/>
            <person name="Sharp S."/>
            <person name="Skelton J."/>
            <person name="Simmonds M.N."/>
            <person name="Squares R."/>
            <person name="Squares S."/>
            <person name="Stevens K."/>
            <person name="Taylor K."/>
            <person name="Taylor R.G."/>
            <person name="Tivey A."/>
            <person name="Walsh S.V."/>
            <person name="Warren T."/>
            <person name="Whitehead S."/>
            <person name="Woodward J.R."/>
            <person name="Volckaert G."/>
            <person name="Aert R."/>
            <person name="Robben J."/>
            <person name="Grymonprez B."/>
            <person name="Weltjens I."/>
            <person name="Vanstreels E."/>
            <person name="Rieger M."/>
            <person name="Schaefer M."/>
            <person name="Mueller-Auer S."/>
            <person name="Gabel C."/>
            <person name="Fuchs M."/>
            <person name="Duesterhoeft A."/>
            <person name="Fritzc C."/>
            <person name="Holzer E."/>
            <person name="Moestl D."/>
            <person name="Hilbert H."/>
            <person name="Borzym K."/>
            <person name="Langer I."/>
            <person name="Beck A."/>
            <person name="Lehrach H."/>
            <person name="Reinhardt R."/>
            <person name="Pohl T.M."/>
            <person name="Eger P."/>
            <person name="Zimmermann W."/>
            <person name="Wedler H."/>
            <person name="Wambutt R."/>
            <person name="Purnelle B."/>
            <person name="Goffeau A."/>
            <person name="Cadieu E."/>
            <person name="Dreano S."/>
            <person name="Gloux S."/>
            <person name="Lelaure V."/>
            <person name="Mottier S."/>
            <person name="Galibert F."/>
            <person name="Aves S.J."/>
            <person name="Xiang Z."/>
            <person name="Hunt C."/>
            <person name="Moore K."/>
            <person name="Hurst S.M."/>
            <person name="Lucas M."/>
            <person name="Rochet M."/>
            <person name="Gaillardin C."/>
            <person name="Tallada V.A."/>
            <person name="Garzon A."/>
            <person name="Thode G."/>
            <person name="Daga R.R."/>
            <person name="Cruzado L."/>
            <person name="Jimenez J."/>
            <person name="Sanchez M."/>
            <person name="del Rey F."/>
            <person name="Benito J."/>
            <person name="Dominguez A."/>
            <person name="Revuelta J.L."/>
            <person name="Moreno S."/>
            <person name="Armstrong J."/>
            <person name="Forsburg S.L."/>
            <person name="Cerutti L."/>
            <person name="Lowe T."/>
            <person name="McCombie W.R."/>
            <person name="Paulsen I."/>
            <person name="Potashkin J."/>
            <person name="Shpakovski G.V."/>
            <person name="Ussery D."/>
            <person name="Barrell B.G."/>
            <person name="Nurse P."/>
        </authorList>
    </citation>
    <scope>NUCLEOTIDE SEQUENCE [LARGE SCALE GENOMIC DNA]</scope>
    <source>
        <strain>972 / ATCC 24843</strain>
    </source>
</reference>
<name>TIM23_SCHPO</name>
<accession>Q9USM7</accession>
<keyword id="KW-0472">Membrane</keyword>
<keyword id="KW-0496">Mitochondrion</keyword>
<keyword id="KW-0999">Mitochondrion inner membrane</keyword>
<keyword id="KW-0653">Protein transport</keyword>
<keyword id="KW-1185">Reference proteome</keyword>
<keyword id="KW-0811">Translocation</keyword>
<keyword id="KW-0812">Transmembrane</keyword>
<keyword id="KW-1133">Transmembrane helix</keyword>
<keyword id="KW-0813">Transport</keyword>
<organism>
    <name type="scientific">Schizosaccharomyces pombe (strain 972 / ATCC 24843)</name>
    <name type="common">Fission yeast</name>
    <dbReference type="NCBI Taxonomy" id="284812"/>
    <lineage>
        <taxon>Eukaryota</taxon>
        <taxon>Fungi</taxon>
        <taxon>Dikarya</taxon>
        <taxon>Ascomycota</taxon>
        <taxon>Taphrinomycotina</taxon>
        <taxon>Schizosaccharomycetes</taxon>
        <taxon>Schizosaccharomycetales</taxon>
        <taxon>Schizosaccharomycetaceae</taxon>
        <taxon>Schizosaccharomyces</taxon>
    </lineage>
</organism>
<evidence type="ECO:0000250" key="1"/>
<evidence type="ECO:0000255" key="2"/>
<evidence type="ECO:0000256" key="3">
    <source>
        <dbReference type="SAM" id="MobiDB-lite"/>
    </source>
</evidence>
<evidence type="ECO:0000305" key="4"/>
<gene>
    <name type="primary">tim23</name>
    <name type="ORF">SPCC16A11.09c</name>
</gene>
<proteinExistence type="inferred from homology"/>
<sequence length="210" mass="22622">MSWLFTRNKEEEPTSKIDSSELQVPTEATASDILSGSEFDPAKLHPLADLDKPLDYLLIEEDALSTLPGDSMAIPSRGWQDDLCYGTGTSYLSGLAIGGLWGLNEGMKKTKDITSTRLRLNGILNGVTRRGPFVGNSLGVLALVYNGINSLIGYKRQKHGWENSVAAGALTGALYKSTRGLRAMAISSSLVATAAGIWTLAKRSFTKRLN</sequence>